<gene>
    <name evidence="5" type="primary">Vm32E</name>
</gene>
<organism>
    <name type="scientific">Drosophila santomea</name>
    <name type="common">Fruit fly</name>
    <dbReference type="NCBI Taxonomy" id="129105"/>
    <lineage>
        <taxon>Eukaryota</taxon>
        <taxon>Metazoa</taxon>
        <taxon>Ecdysozoa</taxon>
        <taxon>Arthropoda</taxon>
        <taxon>Hexapoda</taxon>
        <taxon>Insecta</taxon>
        <taxon>Pterygota</taxon>
        <taxon>Neoptera</taxon>
        <taxon>Endopterygota</taxon>
        <taxon>Diptera</taxon>
        <taxon>Brachycera</taxon>
        <taxon>Muscomorpha</taxon>
        <taxon>Ephydroidea</taxon>
        <taxon>Drosophilidae</taxon>
        <taxon>Drosophila</taxon>
        <taxon>Sophophora</taxon>
    </lineage>
</organism>
<evidence type="ECO:0000250" key="1">
    <source>
        <dbReference type="UniProtKB" id="Q9VKI3"/>
    </source>
</evidence>
<evidence type="ECO:0000255" key="2"/>
<evidence type="ECO:0000255" key="3">
    <source>
        <dbReference type="PROSITE-ProRule" id="PRU00483"/>
    </source>
</evidence>
<evidence type="ECO:0000305" key="4"/>
<evidence type="ECO:0000312" key="5">
    <source>
        <dbReference type="EMBL" id="ABO71725.1"/>
    </source>
</evidence>
<protein>
    <recommendedName>
        <fullName evidence="5">Vitelline membrane protein Vm32E</fullName>
    </recommendedName>
</protein>
<dbReference type="EMBL" id="EF441684">
    <property type="protein sequence ID" value="ABO71725.1"/>
    <property type="molecule type" value="Genomic_DNA"/>
</dbReference>
<dbReference type="EnsemblMetazoa" id="XM_039644212.2">
    <property type="protein sequence ID" value="XP_039500146.1"/>
    <property type="gene ID" value="LOC120457015"/>
</dbReference>
<dbReference type="GO" id="GO:0005615">
    <property type="term" value="C:extracellular space"/>
    <property type="evidence" value="ECO:0000250"/>
    <property type="project" value="UniProtKB"/>
</dbReference>
<dbReference type="GO" id="GO:0008316">
    <property type="term" value="F:structural constituent of vitelline membrane"/>
    <property type="evidence" value="ECO:0000250"/>
    <property type="project" value="UniProtKB"/>
</dbReference>
<dbReference type="GO" id="GO:0007305">
    <property type="term" value="P:vitelline membrane formation involved in chorion-containing eggshell formation"/>
    <property type="evidence" value="ECO:0000250"/>
    <property type="project" value="UniProtKB"/>
</dbReference>
<dbReference type="InterPro" id="IPR013135">
    <property type="entry name" value="Vitelline_membr_Cys-rich-dom"/>
</dbReference>
<dbReference type="Pfam" id="PF10542">
    <property type="entry name" value="Vitelline_membr"/>
    <property type="match status" value="1"/>
</dbReference>
<dbReference type="PROSITE" id="PS51137">
    <property type="entry name" value="VM"/>
    <property type="match status" value="1"/>
</dbReference>
<sequence length="116" mass="12142">MKIVAFTLVAFVALAGASCPYAAPAAAYPAPVAPSGYPAPPCPTNYLFSCQPNLAPAPCAQEAPAYGSAGAYTEQVPHYVGNPSREQVQQFHQRIGMAALMEELRGLGQGIQGQQY</sequence>
<feature type="signal peptide" evidence="2">
    <location>
        <begin position="1"/>
        <end position="17"/>
    </location>
</feature>
<feature type="chain" id="PRO_0000398801" description="Vitelline membrane protein Vm32E" evidence="2">
    <location>
        <begin position="18"/>
        <end position="116"/>
    </location>
</feature>
<feature type="domain" description="VM" evidence="3">
    <location>
        <begin position="36"/>
        <end position="73"/>
    </location>
</feature>
<reference evidence="5" key="1">
    <citation type="journal article" date="2007" name="Mol. Biol. Evol.">
        <title>Rapid evolution of outer egg membrane proteins in the Drosophila melanogaster subgroup: a case of ecologically driven evolution of female reproductive traits.</title>
        <authorList>
            <person name="Jagadeeshan S."/>
            <person name="Singh R.S."/>
        </authorList>
    </citation>
    <scope>NUCLEOTIDE SEQUENCE [GENOMIC DNA]</scope>
</reference>
<name>VTU4_DROSN</name>
<keyword id="KW-0964">Secreted</keyword>
<keyword id="KW-0732">Signal</keyword>
<accession>A4UM16</accession>
<proteinExistence type="inferred from homology"/>
<comment type="function">
    <text evidence="1">Major early eggshell protein.</text>
</comment>
<comment type="subcellular location">
    <subcellularLocation>
        <location evidence="1">Secreted</location>
    </subcellularLocation>
</comment>
<comment type="similarity">
    <text evidence="4">Belongs to the vitelline membrane family.</text>
</comment>